<reference key="1">
    <citation type="journal article" date="1998" name="Science">
        <title>Genome sequence of the nematode C. elegans: a platform for investigating biology.</title>
        <authorList>
            <consortium name="The C. elegans sequencing consortium"/>
        </authorList>
    </citation>
    <scope>NUCLEOTIDE SEQUENCE [LARGE SCALE GENOMIC DNA]</scope>
    <source>
        <strain>Bristol N2</strain>
    </source>
</reference>
<reference key="2">
    <citation type="journal article" date="2004" name="Dev. Biol.">
        <title>Identification of lineage-specific zygotic transcripts in early Caenorhabditis elegans embryos.</title>
        <authorList>
            <person name="Robertson S.M."/>
            <person name="Shetty P."/>
            <person name="Lin R."/>
        </authorList>
    </citation>
    <scope>FUNCTION</scope>
    <scope>DEVELOPMENTAL STAGE</scope>
</reference>
<accession>P46500</accession>
<feature type="chain" id="PRO_0000065312" description="Skn-1 dependent zygotic transcript 15 protein">
    <location>
        <begin position="1"/>
        <end position="345"/>
    </location>
</feature>
<feature type="domain" description="F-box" evidence="1">
    <location>
        <begin position="11"/>
        <end position="55"/>
    </location>
</feature>
<gene>
    <name type="primary">sdz-15</name>
    <name type="ORF">F23F12.4</name>
</gene>
<name>SDZ15_CAEEL</name>
<dbReference type="EMBL" id="FO081210">
    <property type="protein sequence ID" value="CCD69925.1"/>
    <property type="molecule type" value="Genomic_DNA"/>
</dbReference>
<dbReference type="PIR" id="D88485">
    <property type="entry name" value="D88485"/>
</dbReference>
<dbReference type="RefSeq" id="NP_498432.1">
    <property type="nucleotide sequence ID" value="NM_066031.3"/>
</dbReference>
<dbReference type="BioGRID" id="49688">
    <property type="interactions" value="1"/>
</dbReference>
<dbReference type="FunCoup" id="P46500">
    <property type="interactions" value="244"/>
</dbReference>
<dbReference type="IntAct" id="P46500">
    <property type="interactions" value="1"/>
</dbReference>
<dbReference type="PaxDb" id="6239-F23F12.4"/>
<dbReference type="EnsemblMetazoa" id="F23F12.4.1">
    <property type="protein sequence ID" value="F23F12.4.1"/>
    <property type="gene ID" value="WBGene00017752"/>
</dbReference>
<dbReference type="GeneID" id="184905"/>
<dbReference type="KEGG" id="cel:CELE_F23F12.4"/>
<dbReference type="UCSC" id="F23F12.4">
    <property type="organism name" value="c. elegans"/>
</dbReference>
<dbReference type="AGR" id="WB:WBGene00017752"/>
<dbReference type="CTD" id="184905"/>
<dbReference type="WormBase" id="F23F12.4">
    <property type="protein sequence ID" value="CE01251"/>
    <property type="gene ID" value="WBGene00017752"/>
    <property type="gene designation" value="sdz-15"/>
</dbReference>
<dbReference type="GeneTree" id="ENSGT00940000163400"/>
<dbReference type="HOGENOM" id="CLU_044397_1_1_1"/>
<dbReference type="InParanoid" id="P46500"/>
<dbReference type="OMA" id="ECTETSE"/>
<dbReference type="OrthoDB" id="5873707at2759"/>
<dbReference type="PhylomeDB" id="P46500"/>
<dbReference type="PRO" id="PR:P46500"/>
<dbReference type="Proteomes" id="UP000001940">
    <property type="component" value="Chromosome III"/>
</dbReference>
<dbReference type="Bgee" id="WBGene00017752">
    <property type="expression patterns" value="Expressed in embryo and 2 other cell types or tissues"/>
</dbReference>
<dbReference type="GO" id="GO:0009792">
    <property type="term" value="P:embryo development ending in birth or egg hatching"/>
    <property type="evidence" value="ECO:0000270"/>
    <property type="project" value="UniProtKB"/>
</dbReference>
<dbReference type="InterPro" id="IPR012885">
    <property type="entry name" value="F-box-assoc_dom_typ2"/>
</dbReference>
<dbReference type="InterPro" id="IPR001810">
    <property type="entry name" value="F-box_dom"/>
</dbReference>
<dbReference type="PANTHER" id="PTHR21503:SF53">
    <property type="entry name" value="F-BOX ASSOCIATED DOMAIN-CONTAINING PROTEIN-RELATED"/>
    <property type="match status" value="1"/>
</dbReference>
<dbReference type="PANTHER" id="PTHR21503">
    <property type="entry name" value="F-BOX-CONTAINING HYPOTHETICAL PROTEIN C.ELEGANS"/>
    <property type="match status" value="1"/>
</dbReference>
<dbReference type="Pfam" id="PF07735">
    <property type="entry name" value="FBA_2"/>
    <property type="match status" value="1"/>
</dbReference>
<dbReference type="PROSITE" id="PS50181">
    <property type="entry name" value="FBOX"/>
    <property type="match status" value="1"/>
</dbReference>
<sequence length="345" mass="39407">MLSPSSSTVPAFGLHKLPHLVSDKVVKSMVPMELFTYSMVAEETKALVKRLFKKVSFQVSIFVQEQDYSVSFGQIGGAISNLGCEVLSQESEQVNGTQIWKMDENTEVQMEHYYDGQICRSYWKMKKETEAILKVLDYLRSVFNVKEVSVSFSIDEKYDAVEFLKSVKNRGVQLKNVNITGFEVTLEAEAYKNLLNECTETSELNVAPHVNWGFEYPVSNFSNFCQKFLTIEHAHWVTVHHLKSLRNCASVTLNNSKLTNQNLNWFLREWMEMSGASLRNVDLEVKQLDLPRIINGLKWTIKEGIISGFGGFQKLPPGDCFEIQRIDGVKATISRIGERFLMTRD</sequence>
<proteinExistence type="evidence at transcript level"/>
<comment type="function">
    <text evidence="2">May have a role in embryogenesis.</text>
</comment>
<comment type="developmental stage">
    <text evidence="2">Thirteenfold increase in expression between 4-cell and 12-cell embryos.</text>
</comment>
<evidence type="ECO:0000255" key="1">
    <source>
        <dbReference type="PROSITE-ProRule" id="PRU00080"/>
    </source>
</evidence>
<evidence type="ECO:0000269" key="2">
    <source>
    </source>
</evidence>
<keyword id="KW-0217">Developmental protein</keyword>
<keyword id="KW-1185">Reference proteome</keyword>
<protein>
    <recommendedName>
        <fullName>Skn-1 dependent zygotic transcript 15 protein</fullName>
    </recommendedName>
</protein>
<organism>
    <name type="scientific">Caenorhabditis elegans</name>
    <dbReference type="NCBI Taxonomy" id="6239"/>
    <lineage>
        <taxon>Eukaryota</taxon>
        <taxon>Metazoa</taxon>
        <taxon>Ecdysozoa</taxon>
        <taxon>Nematoda</taxon>
        <taxon>Chromadorea</taxon>
        <taxon>Rhabditida</taxon>
        <taxon>Rhabditina</taxon>
        <taxon>Rhabditomorpha</taxon>
        <taxon>Rhabditoidea</taxon>
        <taxon>Rhabditidae</taxon>
        <taxon>Peloderinae</taxon>
        <taxon>Caenorhabditis</taxon>
    </lineage>
</organism>